<gene>
    <name evidence="2" type="primary">purF</name>
    <name type="ordered locus">MTH_646</name>
</gene>
<keyword id="KW-0004">4Fe-4S</keyword>
<keyword id="KW-0315">Glutamine amidotransferase</keyword>
<keyword id="KW-0328">Glycosyltransferase</keyword>
<keyword id="KW-0408">Iron</keyword>
<keyword id="KW-0411">Iron-sulfur</keyword>
<keyword id="KW-0460">Magnesium</keyword>
<keyword id="KW-0479">Metal-binding</keyword>
<keyword id="KW-0658">Purine biosynthesis</keyword>
<keyword id="KW-1185">Reference proteome</keyword>
<keyword id="KW-0808">Transferase</keyword>
<organism>
    <name type="scientific">Methanothermobacter thermautotrophicus (strain ATCC 29096 / DSM 1053 / JCM 10044 / NBRC 100330 / Delta H)</name>
    <name type="common">Methanobacterium thermoautotrophicum</name>
    <dbReference type="NCBI Taxonomy" id="187420"/>
    <lineage>
        <taxon>Archaea</taxon>
        <taxon>Methanobacteriati</taxon>
        <taxon>Methanobacteriota</taxon>
        <taxon>Methanomada group</taxon>
        <taxon>Methanobacteria</taxon>
        <taxon>Methanobacteriales</taxon>
        <taxon>Methanobacteriaceae</taxon>
        <taxon>Methanothermobacter</taxon>
    </lineage>
</organism>
<evidence type="ECO:0000250" key="1"/>
<evidence type="ECO:0000255" key="2">
    <source>
        <dbReference type="HAMAP-Rule" id="MF_01931"/>
    </source>
</evidence>
<dbReference type="EC" id="2.4.2.14" evidence="2"/>
<dbReference type="EMBL" id="AE000666">
    <property type="protein sequence ID" value="AAB85151.1"/>
    <property type="molecule type" value="Genomic_DNA"/>
</dbReference>
<dbReference type="PIR" id="H69185">
    <property type="entry name" value="H69185"/>
</dbReference>
<dbReference type="SMR" id="O26742"/>
<dbReference type="FunCoup" id="O26742">
    <property type="interactions" value="119"/>
</dbReference>
<dbReference type="STRING" id="187420.MTH_646"/>
<dbReference type="MEROPS" id="C44.001"/>
<dbReference type="PaxDb" id="187420-MTH_646"/>
<dbReference type="EnsemblBacteria" id="AAB85151">
    <property type="protein sequence ID" value="AAB85151"/>
    <property type="gene ID" value="MTH_646"/>
</dbReference>
<dbReference type="KEGG" id="mth:MTH_646"/>
<dbReference type="PATRIC" id="fig|187420.15.peg.626"/>
<dbReference type="HOGENOM" id="CLU_022389_3_1_2"/>
<dbReference type="InParanoid" id="O26742"/>
<dbReference type="UniPathway" id="UPA00074">
    <property type="reaction ID" value="UER00124"/>
</dbReference>
<dbReference type="Proteomes" id="UP000005223">
    <property type="component" value="Chromosome"/>
</dbReference>
<dbReference type="GO" id="GO:0051539">
    <property type="term" value="F:4 iron, 4 sulfur cluster binding"/>
    <property type="evidence" value="ECO:0007669"/>
    <property type="project" value="UniProtKB-KW"/>
</dbReference>
<dbReference type="GO" id="GO:0004044">
    <property type="term" value="F:amidophosphoribosyltransferase activity"/>
    <property type="evidence" value="ECO:0007669"/>
    <property type="project" value="UniProtKB-UniRule"/>
</dbReference>
<dbReference type="GO" id="GO:0000287">
    <property type="term" value="F:magnesium ion binding"/>
    <property type="evidence" value="ECO:0007669"/>
    <property type="project" value="UniProtKB-UniRule"/>
</dbReference>
<dbReference type="GO" id="GO:0006189">
    <property type="term" value="P:'de novo' IMP biosynthetic process"/>
    <property type="evidence" value="ECO:0007669"/>
    <property type="project" value="UniProtKB-UniRule"/>
</dbReference>
<dbReference type="GO" id="GO:0009113">
    <property type="term" value="P:purine nucleobase biosynthetic process"/>
    <property type="evidence" value="ECO:0007669"/>
    <property type="project" value="InterPro"/>
</dbReference>
<dbReference type="CDD" id="cd00715">
    <property type="entry name" value="GPATase_N"/>
    <property type="match status" value="1"/>
</dbReference>
<dbReference type="CDD" id="cd06223">
    <property type="entry name" value="PRTases_typeI"/>
    <property type="match status" value="1"/>
</dbReference>
<dbReference type="Gene3D" id="3.40.50.2020">
    <property type="match status" value="1"/>
</dbReference>
<dbReference type="Gene3D" id="3.60.20.10">
    <property type="entry name" value="Glutamine Phosphoribosylpyrophosphate, subunit 1, domain 1"/>
    <property type="match status" value="1"/>
</dbReference>
<dbReference type="HAMAP" id="MF_01931">
    <property type="entry name" value="PurF"/>
    <property type="match status" value="1"/>
</dbReference>
<dbReference type="InterPro" id="IPR017932">
    <property type="entry name" value="GATase_2_dom"/>
</dbReference>
<dbReference type="InterPro" id="IPR029055">
    <property type="entry name" value="Ntn_hydrolases_N"/>
</dbReference>
<dbReference type="InterPro" id="IPR000836">
    <property type="entry name" value="PRibTrfase_dom"/>
</dbReference>
<dbReference type="InterPro" id="IPR029057">
    <property type="entry name" value="PRTase-like"/>
</dbReference>
<dbReference type="InterPro" id="IPR005854">
    <property type="entry name" value="PurF"/>
</dbReference>
<dbReference type="InterPro" id="IPR035584">
    <property type="entry name" value="PurF_N"/>
</dbReference>
<dbReference type="NCBIfam" id="TIGR01134">
    <property type="entry name" value="purF"/>
    <property type="match status" value="1"/>
</dbReference>
<dbReference type="PANTHER" id="PTHR11907">
    <property type="entry name" value="AMIDOPHOSPHORIBOSYLTRANSFERASE"/>
    <property type="match status" value="1"/>
</dbReference>
<dbReference type="Pfam" id="PF13522">
    <property type="entry name" value="GATase_6"/>
    <property type="match status" value="1"/>
</dbReference>
<dbReference type="Pfam" id="PF00156">
    <property type="entry name" value="Pribosyltran"/>
    <property type="match status" value="1"/>
</dbReference>
<dbReference type="PIRSF" id="PIRSF000485">
    <property type="entry name" value="Amd_phspho_trans"/>
    <property type="match status" value="1"/>
</dbReference>
<dbReference type="SUPFAM" id="SSF56235">
    <property type="entry name" value="N-terminal nucleophile aminohydrolases (Ntn hydrolases)"/>
    <property type="match status" value="1"/>
</dbReference>
<dbReference type="SUPFAM" id="SSF53271">
    <property type="entry name" value="PRTase-like"/>
    <property type="match status" value="1"/>
</dbReference>
<dbReference type="PROSITE" id="PS51278">
    <property type="entry name" value="GATASE_TYPE_2"/>
    <property type="match status" value="1"/>
</dbReference>
<dbReference type="PROSITE" id="PS00103">
    <property type="entry name" value="PUR_PYR_PR_TRANSFER"/>
    <property type="match status" value="1"/>
</dbReference>
<proteinExistence type="inferred from homology"/>
<comment type="function">
    <text evidence="2">Catalyzes the formation of phosphoribosylamine from phosphoribosylpyrophosphate (PRPP) and glutamine.</text>
</comment>
<comment type="catalytic activity">
    <reaction evidence="2">
        <text>5-phospho-beta-D-ribosylamine + L-glutamate + diphosphate = 5-phospho-alpha-D-ribose 1-diphosphate + L-glutamine + H2O</text>
        <dbReference type="Rhea" id="RHEA:14905"/>
        <dbReference type="ChEBI" id="CHEBI:15377"/>
        <dbReference type="ChEBI" id="CHEBI:29985"/>
        <dbReference type="ChEBI" id="CHEBI:33019"/>
        <dbReference type="ChEBI" id="CHEBI:58017"/>
        <dbReference type="ChEBI" id="CHEBI:58359"/>
        <dbReference type="ChEBI" id="CHEBI:58681"/>
        <dbReference type="EC" id="2.4.2.14"/>
    </reaction>
</comment>
<comment type="cofactor">
    <cofactor evidence="2">
        <name>Mg(2+)</name>
        <dbReference type="ChEBI" id="CHEBI:18420"/>
    </cofactor>
    <text evidence="2">Binds 1 Mg(2+) ion per subunit.</text>
</comment>
<comment type="cofactor">
    <cofactor evidence="2">
        <name>[4Fe-4S] cluster</name>
        <dbReference type="ChEBI" id="CHEBI:49883"/>
    </cofactor>
    <text evidence="2">Binds 1 [4Fe-4S] cluster per subunit.</text>
</comment>
<comment type="pathway">
    <text evidence="2">Purine metabolism; IMP biosynthesis via de novo pathway; N(1)-(5-phospho-D-ribosyl)glycinamide from 5-phospho-alpha-D-ribose 1-diphosphate: step 1/2.</text>
</comment>
<comment type="similarity">
    <text evidence="2">In the C-terminal section; belongs to the purine/pyrimidine phosphoribosyltransferase family.</text>
</comment>
<reference key="1">
    <citation type="journal article" date="1997" name="J. Bacteriol.">
        <title>Complete genome sequence of Methanobacterium thermoautotrophicum deltaH: functional analysis and comparative genomics.</title>
        <authorList>
            <person name="Smith D.R."/>
            <person name="Doucette-Stamm L.A."/>
            <person name="Deloughery C."/>
            <person name="Lee H.-M."/>
            <person name="Dubois J."/>
            <person name="Aldredge T."/>
            <person name="Bashirzadeh R."/>
            <person name="Blakely D."/>
            <person name="Cook R."/>
            <person name="Gilbert K."/>
            <person name="Harrison D."/>
            <person name="Hoang L."/>
            <person name="Keagle P."/>
            <person name="Lumm W."/>
            <person name="Pothier B."/>
            <person name="Qiu D."/>
            <person name="Spadafora R."/>
            <person name="Vicare R."/>
            <person name="Wang Y."/>
            <person name="Wierzbowski J."/>
            <person name="Gibson R."/>
            <person name="Jiwani N."/>
            <person name="Caruso A."/>
            <person name="Bush D."/>
            <person name="Safer H."/>
            <person name="Patwell D."/>
            <person name="Prabhakar S."/>
            <person name="McDougall S."/>
            <person name="Shimer G."/>
            <person name="Goyal A."/>
            <person name="Pietrovski S."/>
            <person name="Church G.M."/>
            <person name="Daniels C.J."/>
            <person name="Mao J.-I."/>
            <person name="Rice P."/>
            <person name="Noelling J."/>
            <person name="Reeve J.N."/>
        </authorList>
    </citation>
    <scope>NUCLEOTIDE SEQUENCE [LARGE SCALE GENOMIC DNA]</scope>
    <source>
        <strain>ATCC 29096 / DSM 1053 / JCM 10044 / NBRC 100330 / Delta H</strain>
    </source>
</reference>
<feature type="propeptide" id="PRO_0000029275" evidence="1">
    <location>
        <begin position="1"/>
        <end position="10"/>
    </location>
</feature>
<feature type="chain" id="PRO_0000029276" description="Amidophosphoribosyltransferase">
    <location>
        <begin position="11"/>
        <end position="474"/>
    </location>
</feature>
<feature type="domain" description="Glutamine amidotransferase type-2" evidence="2">
    <location>
        <begin position="11"/>
        <end position="234"/>
    </location>
</feature>
<feature type="active site" description="Nucleophile" evidence="2">
    <location>
        <position position="11"/>
    </location>
</feature>
<feature type="binding site" evidence="2">
    <location>
        <position position="250"/>
    </location>
    <ligand>
        <name>[4Fe-4S] cluster</name>
        <dbReference type="ChEBI" id="CHEBI:49883"/>
    </ligand>
</feature>
<feature type="binding site" evidence="2">
    <location>
        <position position="297"/>
    </location>
    <ligand>
        <name>Mg(2+)</name>
        <dbReference type="ChEBI" id="CHEBI:18420"/>
    </ligand>
</feature>
<feature type="binding site" evidence="2">
    <location>
        <position position="359"/>
    </location>
    <ligand>
        <name>Mg(2+)</name>
        <dbReference type="ChEBI" id="CHEBI:18420"/>
    </ligand>
</feature>
<feature type="binding site" evidence="2">
    <location>
        <position position="360"/>
    </location>
    <ligand>
        <name>Mg(2+)</name>
        <dbReference type="ChEBI" id="CHEBI:18420"/>
    </ligand>
</feature>
<feature type="binding site" evidence="2">
    <location>
        <position position="396"/>
    </location>
    <ligand>
        <name>[4Fe-4S] cluster</name>
        <dbReference type="ChEBI" id="CHEBI:49883"/>
    </ligand>
</feature>
<feature type="binding site" evidence="2">
    <location>
        <position position="447"/>
    </location>
    <ligand>
        <name>[4Fe-4S] cluster</name>
        <dbReference type="ChEBI" id="CHEBI:49883"/>
    </ligand>
</feature>
<feature type="binding site" evidence="2">
    <location>
        <position position="450"/>
    </location>
    <ligand>
        <name>[4Fe-4S] cluster</name>
        <dbReference type="ChEBI" id="CHEBI:49883"/>
    </ligand>
</feature>
<protein>
    <recommendedName>
        <fullName evidence="2">Amidophosphoribosyltransferase</fullName>
        <shortName evidence="2">ATase</shortName>
        <ecNumber evidence="2">2.4.2.14</ecNumber>
    </recommendedName>
    <alternativeName>
        <fullName evidence="2">Glutamine phosphoribosylpyrophosphate amidotransferase</fullName>
        <shortName evidence="2">GPATase</shortName>
    </alternativeName>
</protein>
<accession>O26742</accession>
<sequence>MLGESEVRDKCGIVGIYSQDKKTGVASQIYYALYALQHRGQESAGISTFNGNDILTHRGMGLVCDVFNPEKLEELKGNVGIGHVRYSTTGESRIENSQPFWSEFQGGKIAIAHNGDIINSMELREELEEEGHNFVSTTDSEVICHLLSREYDEKPNMIYSIKRVSEQLVGSYSLVVLLNQDLYVVRDPVGIKPLAFARKGSTQIVASETVAFDVIGAEHVRDVQPGEILHLNRGKSYWVANAPNTRRAHCMFEYVYFARPDSVIDGRNVYRVRLNIGEALYREHPANADVVVPVPDSSIPAAIGYSRASGIPYGEGLIKNRYVGRTFIMPTQEERETAVKLKMNPIRSELEGKRIVLIDDSIVRGTTSRALIDIIRDAGAEEIHLRIGCPPIKSPCYYGIAMATKKELIASTRNVEEIRRIIGVDSLGYLSIESLVECIGIKKGFLCTGCLDGDYPTPLPSDISEYEAMRSCSR</sequence>
<name>PUR1_METTH</name>